<gene>
    <name evidence="1" type="primary">rpmA</name>
    <name type="ordered locus">A1C_05690</name>
</gene>
<protein>
    <recommendedName>
        <fullName evidence="1">Large ribosomal subunit protein bL27</fullName>
    </recommendedName>
    <alternativeName>
        <fullName evidence="3">50S ribosomal protein L27</fullName>
    </alternativeName>
</protein>
<comment type="similarity">
    <text evidence="1">Belongs to the bacterial ribosomal protein bL27 family.</text>
</comment>
<reference key="1">
    <citation type="submission" date="2007-09" db="EMBL/GenBank/DDBJ databases">
        <title>Complete genome sequence of Rickettsia akari.</title>
        <authorList>
            <person name="Madan A."/>
            <person name="Fahey J."/>
            <person name="Helton E."/>
            <person name="Ketteman M."/>
            <person name="Madan A."/>
            <person name="Rodrigues S."/>
            <person name="Sanchez A."/>
            <person name="Whiting M."/>
            <person name="Dasch G."/>
            <person name="Eremeeva M."/>
        </authorList>
    </citation>
    <scope>NUCLEOTIDE SEQUENCE [LARGE SCALE GENOMIC DNA]</scope>
    <source>
        <strain>Hartford</strain>
    </source>
</reference>
<evidence type="ECO:0000255" key="1">
    <source>
        <dbReference type="HAMAP-Rule" id="MF_00539"/>
    </source>
</evidence>
<evidence type="ECO:0000256" key="2">
    <source>
        <dbReference type="SAM" id="MobiDB-lite"/>
    </source>
</evidence>
<evidence type="ECO:0000305" key="3"/>
<organism>
    <name type="scientific">Rickettsia akari (strain Hartford)</name>
    <dbReference type="NCBI Taxonomy" id="293614"/>
    <lineage>
        <taxon>Bacteria</taxon>
        <taxon>Pseudomonadati</taxon>
        <taxon>Pseudomonadota</taxon>
        <taxon>Alphaproteobacteria</taxon>
        <taxon>Rickettsiales</taxon>
        <taxon>Rickettsiaceae</taxon>
        <taxon>Rickettsieae</taxon>
        <taxon>Rickettsia</taxon>
        <taxon>spotted fever group</taxon>
    </lineage>
</organism>
<feature type="chain" id="PRO_1000017584" description="Large ribosomal subunit protein bL27">
    <location>
        <begin position="1"/>
        <end position="86"/>
    </location>
</feature>
<feature type="region of interest" description="Disordered" evidence="2">
    <location>
        <begin position="1"/>
        <end position="26"/>
    </location>
</feature>
<name>RL27_RICAH</name>
<proteinExistence type="inferred from homology"/>
<accession>A8GPP8</accession>
<dbReference type="EMBL" id="CP000847">
    <property type="protein sequence ID" value="ABV75373.1"/>
    <property type="molecule type" value="Genomic_DNA"/>
</dbReference>
<dbReference type="RefSeq" id="WP_012150003.1">
    <property type="nucleotide sequence ID" value="NC_009881.1"/>
</dbReference>
<dbReference type="SMR" id="A8GPP8"/>
<dbReference type="STRING" id="293614.A1C_05690"/>
<dbReference type="KEGG" id="rak:A1C_05690"/>
<dbReference type="eggNOG" id="COG0211">
    <property type="taxonomic scope" value="Bacteria"/>
</dbReference>
<dbReference type="HOGENOM" id="CLU_095424_4_1_5"/>
<dbReference type="Proteomes" id="UP000006830">
    <property type="component" value="Chromosome"/>
</dbReference>
<dbReference type="GO" id="GO:1990904">
    <property type="term" value="C:ribonucleoprotein complex"/>
    <property type="evidence" value="ECO:0007669"/>
    <property type="project" value="UniProtKB-KW"/>
</dbReference>
<dbReference type="GO" id="GO:0005840">
    <property type="term" value="C:ribosome"/>
    <property type="evidence" value="ECO:0007669"/>
    <property type="project" value="UniProtKB-KW"/>
</dbReference>
<dbReference type="GO" id="GO:0003735">
    <property type="term" value="F:structural constituent of ribosome"/>
    <property type="evidence" value="ECO:0007669"/>
    <property type="project" value="InterPro"/>
</dbReference>
<dbReference type="GO" id="GO:0006412">
    <property type="term" value="P:translation"/>
    <property type="evidence" value="ECO:0007669"/>
    <property type="project" value="UniProtKB-UniRule"/>
</dbReference>
<dbReference type="FunFam" id="2.40.50.100:FF:000020">
    <property type="entry name" value="50S ribosomal protein L27"/>
    <property type="match status" value="1"/>
</dbReference>
<dbReference type="Gene3D" id="2.40.50.100">
    <property type="match status" value="1"/>
</dbReference>
<dbReference type="HAMAP" id="MF_00539">
    <property type="entry name" value="Ribosomal_bL27"/>
    <property type="match status" value="1"/>
</dbReference>
<dbReference type="InterPro" id="IPR001684">
    <property type="entry name" value="Ribosomal_bL27"/>
</dbReference>
<dbReference type="InterPro" id="IPR018261">
    <property type="entry name" value="Ribosomal_bL27_CS"/>
</dbReference>
<dbReference type="NCBIfam" id="TIGR00062">
    <property type="entry name" value="L27"/>
    <property type="match status" value="1"/>
</dbReference>
<dbReference type="PANTHER" id="PTHR15893:SF0">
    <property type="entry name" value="LARGE RIBOSOMAL SUBUNIT PROTEIN BL27M"/>
    <property type="match status" value="1"/>
</dbReference>
<dbReference type="PANTHER" id="PTHR15893">
    <property type="entry name" value="RIBOSOMAL PROTEIN L27"/>
    <property type="match status" value="1"/>
</dbReference>
<dbReference type="Pfam" id="PF01016">
    <property type="entry name" value="Ribosomal_L27"/>
    <property type="match status" value="1"/>
</dbReference>
<dbReference type="PRINTS" id="PR00063">
    <property type="entry name" value="RIBOSOMALL27"/>
</dbReference>
<dbReference type="SUPFAM" id="SSF110324">
    <property type="entry name" value="Ribosomal L27 protein-like"/>
    <property type="match status" value="1"/>
</dbReference>
<dbReference type="PROSITE" id="PS00831">
    <property type="entry name" value="RIBOSOMAL_L27"/>
    <property type="match status" value="1"/>
</dbReference>
<sequence>MATKKAGGSSRNGRDSAGRRLGVKKSDGQYVIPGNIIVRQRGTTIHPGTNVGLGKDHTIFALIEGRVEFLTKRNHKIVNVKEITNA</sequence>
<keyword id="KW-0687">Ribonucleoprotein</keyword>
<keyword id="KW-0689">Ribosomal protein</keyword>